<protein>
    <recommendedName>
        <fullName evidence="1">Xaa-Pro dipeptidyl-peptidase</fullName>
        <ecNumber evidence="1">3.4.14.11</ecNumber>
    </recommendedName>
    <alternativeName>
        <fullName evidence="1">X-Pro dipeptidyl-peptidase</fullName>
    </alternativeName>
    <alternativeName>
        <fullName evidence="1">X-prolyl-dipeptidyl aminopeptidase</fullName>
        <shortName evidence="1">X-PDAP</shortName>
    </alternativeName>
</protein>
<organism>
    <name type="scientific">Streptococcus pyogenes serotype M2 (strain MGAS10270)</name>
    <dbReference type="NCBI Taxonomy" id="370552"/>
    <lineage>
        <taxon>Bacteria</taxon>
        <taxon>Bacillati</taxon>
        <taxon>Bacillota</taxon>
        <taxon>Bacilli</taxon>
        <taxon>Lactobacillales</taxon>
        <taxon>Streptococcaceae</taxon>
        <taxon>Streptococcus</taxon>
    </lineage>
</organism>
<proteinExistence type="inferred from homology"/>
<keyword id="KW-0031">Aminopeptidase</keyword>
<keyword id="KW-0963">Cytoplasm</keyword>
<keyword id="KW-0378">Hydrolase</keyword>
<keyword id="KW-0645">Protease</keyword>
<keyword id="KW-0720">Serine protease</keyword>
<sequence length="760" mass="86766">MRYNQFSYIPTSLERAAEELKELGFDLDLQKTAKANLESFLRKLFFHYPDSDYPLSHLIAKNDMDALSFFQSEQELSKEVFDLLALQVLGFIPGVDFTEADAFLDKLAFPIHFDETEIIKHIHHLLATRCKSGMTLIDDLVSQGMLTMDNDYHFFNGKSLATFDTSQLIREVVYVEAPLDTDQDGQLDLIKVNIIRPQSQKPLPTLMTPSPYHQGINEVANDKKLYRMEKELVVKKRRQITVEDRDFIPLETQPCKLPIGQNLESFSYINSYSLNDYFLARGFANIYVSGVGTAGSTGFMTSGDYAQIESFKAVIDWLNGRATAYTSHSKNHQVRADWANGLVCTTGKSYLGTMSTGLATTGVDGLAMIIAESAISSWYNYYRENGLVCSPGGYPGEDLDVLTELTYSRNLLAGDYLRHNDRYQELLNQQSQALDRQSGDYNQFWHDRNYLKNAHQIKCDVVYTHGLQDWNVKPRQVYEIFNALPSTINKHLFLHQGEHVYMHNWQSIDFRESMNALLCQKLLGLANDFSLPEMIWQDNTCPQNWQERKVFGTSTIKELDLGQELLLIDNHYGEDEFKAYGKDFRAFKAALFEGKANQALVDILLEEDLPINGEIVLQLKVKSSENKGLLSAQILDYGKKKRLGDLPIALTQSSIDNGQNFSREPLKELPFREDSYRVISKGFMNLQNRNNLSSIETIPNNKWMTVRLPLQPTIYHLEKGDTLRVILYTTDFEHTVRDNSNYALTIDLSQSQLIVPIASN</sequence>
<dbReference type="EC" id="3.4.14.11" evidence="1"/>
<dbReference type="EMBL" id="CP000260">
    <property type="protein sequence ID" value="ABF34709.1"/>
    <property type="molecule type" value="Genomic_DNA"/>
</dbReference>
<dbReference type="SMR" id="Q1JF50"/>
<dbReference type="ESTHER" id="strpy-PEPXP">
    <property type="family name" value="Lactobacillus_peptidase"/>
</dbReference>
<dbReference type="KEGG" id="sph:MGAS10270_Spy1644"/>
<dbReference type="HOGENOM" id="CLU_011800_0_0_9"/>
<dbReference type="Proteomes" id="UP000002436">
    <property type="component" value="Chromosome"/>
</dbReference>
<dbReference type="GO" id="GO:0005737">
    <property type="term" value="C:cytoplasm"/>
    <property type="evidence" value="ECO:0007669"/>
    <property type="project" value="UniProtKB-SubCell"/>
</dbReference>
<dbReference type="GO" id="GO:0004177">
    <property type="term" value="F:aminopeptidase activity"/>
    <property type="evidence" value="ECO:0007669"/>
    <property type="project" value="UniProtKB-KW"/>
</dbReference>
<dbReference type="GO" id="GO:0008239">
    <property type="term" value="F:dipeptidyl-peptidase activity"/>
    <property type="evidence" value="ECO:0007669"/>
    <property type="project" value="UniProtKB-UniRule"/>
</dbReference>
<dbReference type="GO" id="GO:0008236">
    <property type="term" value="F:serine-type peptidase activity"/>
    <property type="evidence" value="ECO:0007669"/>
    <property type="project" value="UniProtKB-KW"/>
</dbReference>
<dbReference type="GO" id="GO:0006508">
    <property type="term" value="P:proteolysis"/>
    <property type="evidence" value="ECO:0007669"/>
    <property type="project" value="UniProtKB-KW"/>
</dbReference>
<dbReference type="Gene3D" id="1.10.246.70">
    <property type="match status" value="1"/>
</dbReference>
<dbReference type="Gene3D" id="3.40.50.1820">
    <property type="entry name" value="alpha/beta hydrolase"/>
    <property type="match status" value="1"/>
</dbReference>
<dbReference type="Gene3D" id="2.60.120.260">
    <property type="entry name" value="Galactose-binding domain-like"/>
    <property type="match status" value="1"/>
</dbReference>
<dbReference type="HAMAP" id="MF_00698">
    <property type="entry name" value="Aminopeptidase_S15"/>
    <property type="match status" value="1"/>
</dbReference>
<dbReference type="InterPro" id="IPR029058">
    <property type="entry name" value="AB_hydrolase_fold"/>
</dbReference>
<dbReference type="InterPro" id="IPR008979">
    <property type="entry name" value="Galactose-bd-like_sf"/>
</dbReference>
<dbReference type="InterPro" id="IPR008252">
    <property type="entry name" value="Pept_S15_Xpro"/>
</dbReference>
<dbReference type="InterPro" id="IPR015251">
    <property type="entry name" value="PepX_N_dom"/>
</dbReference>
<dbReference type="InterPro" id="IPR036313">
    <property type="entry name" value="PepX_N_dom_sf"/>
</dbReference>
<dbReference type="InterPro" id="IPR000383">
    <property type="entry name" value="Xaa-Pro-like_dom"/>
</dbReference>
<dbReference type="InterPro" id="IPR013736">
    <property type="entry name" value="Xaa-Pro_dipept_C"/>
</dbReference>
<dbReference type="InterPro" id="IPR050585">
    <property type="entry name" value="Xaa-Pro_dipeptidyl-ppase/CocE"/>
</dbReference>
<dbReference type="NCBIfam" id="NF003783">
    <property type="entry name" value="PRK05371.1-4"/>
    <property type="match status" value="1"/>
</dbReference>
<dbReference type="PANTHER" id="PTHR43056:SF10">
    <property type="entry name" value="COCE_NOND FAMILY, PUTATIVE (AFU_ORTHOLOGUE AFUA_7G00600)-RELATED"/>
    <property type="match status" value="1"/>
</dbReference>
<dbReference type="PANTHER" id="PTHR43056">
    <property type="entry name" value="PEPTIDASE S9 PROLYL OLIGOPEPTIDASE"/>
    <property type="match status" value="1"/>
</dbReference>
<dbReference type="Pfam" id="PF02129">
    <property type="entry name" value="Peptidase_S15"/>
    <property type="match status" value="1"/>
</dbReference>
<dbReference type="Pfam" id="PF08530">
    <property type="entry name" value="PepX_C"/>
    <property type="match status" value="1"/>
</dbReference>
<dbReference type="Pfam" id="PF09168">
    <property type="entry name" value="PepX_N"/>
    <property type="match status" value="1"/>
</dbReference>
<dbReference type="PRINTS" id="PR00923">
    <property type="entry name" value="LACTOPTASE"/>
</dbReference>
<dbReference type="SMART" id="SM00939">
    <property type="entry name" value="PepX_C"/>
    <property type="match status" value="1"/>
</dbReference>
<dbReference type="SMART" id="SM00940">
    <property type="entry name" value="PepX_N"/>
    <property type="match status" value="1"/>
</dbReference>
<dbReference type="SUPFAM" id="SSF53474">
    <property type="entry name" value="alpha/beta-Hydrolases"/>
    <property type="match status" value="1"/>
</dbReference>
<dbReference type="SUPFAM" id="SSF49785">
    <property type="entry name" value="Galactose-binding domain-like"/>
    <property type="match status" value="1"/>
</dbReference>
<dbReference type="SUPFAM" id="SSF81761">
    <property type="entry name" value="X-Prolyl dipeptidyl aminopeptidase PepX, N-terminal domain"/>
    <property type="match status" value="1"/>
</dbReference>
<comment type="function">
    <text evidence="1">Removes N-terminal dipeptides sequentially from polypeptides having unsubstituted N-termini provided that the penultimate residue is proline.</text>
</comment>
<comment type="catalytic activity">
    <reaction evidence="1">
        <text>Hydrolyzes Xaa-Pro-|- bonds to release unblocked, N-terminal dipeptides from substrates including Ala-Pro-|-p-nitroanilide and (sequentially) Tyr-Pro-|-Phe-Pro-|-Gly-Pro-|-Ile.</text>
        <dbReference type="EC" id="3.4.14.11"/>
    </reaction>
</comment>
<comment type="subunit">
    <text evidence="1">Homodimer.</text>
</comment>
<comment type="subcellular location">
    <subcellularLocation>
        <location evidence="1">Cytoplasm</location>
    </subcellularLocation>
</comment>
<comment type="similarity">
    <text evidence="1">Belongs to the peptidase S15 family.</text>
</comment>
<gene>
    <name evidence="1" type="primary">pepX</name>
    <name type="ordered locus">MGAS10270_Spy1644</name>
</gene>
<feature type="chain" id="PRO_1000045490" description="Xaa-Pro dipeptidyl-peptidase">
    <location>
        <begin position="1"/>
        <end position="760"/>
    </location>
</feature>
<feature type="active site" description="Charge relay system" evidence="1">
    <location>
        <position position="349"/>
    </location>
</feature>
<feature type="active site" description="Charge relay system" evidence="1">
    <location>
        <position position="469"/>
    </location>
</feature>
<feature type="active site" description="Charge relay system" evidence="1">
    <location>
        <position position="499"/>
    </location>
</feature>
<accession>Q1JF50</accession>
<name>PEPX_STRPD</name>
<reference key="1">
    <citation type="journal article" date="2006" name="Proc. Natl. Acad. Sci. U.S.A.">
        <title>Molecular genetic anatomy of inter- and intraserotype variation in the human bacterial pathogen group A Streptococcus.</title>
        <authorList>
            <person name="Beres S.B."/>
            <person name="Richter E.W."/>
            <person name="Nagiec M.J."/>
            <person name="Sumby P."/>
            <person name="Porcella S.F."/>
            <person name="DeLeo F.R."/>
            <person name="Musser J.M."/>
        </authorList>
    </citation>
    <scope>NUCLEOTIDE SEQUENCE [LARGE SCALE GENOMIC DNA]</scope>
    <source>
        <strain>MGAS10270</strain>
    </source>
</reference>
<evidence type="ECO:0000255" key="1">
    <source>
        <dbReference type="HAMAP-Rule" id="MF_00698"/>
    </source>
</evidence>